<gene>
    <name type="primary">P9</name>
</gene>
<name>P9_BPPH6</name>
<proteinExistence type="predicted"/>
<feature type="chain" id="PRO_0000164643" description="Major envelope protein">
    <location>
        <begin position="1"/>
        <end position="90"/>
    </location>
</feature>
<feature type="transmembrane region" description="Helical" evidence="1">
    <location>
        <begin position="53"/>
        <end position="70"/>
    </location>
</feature>
<sequence length="90" mass="9613">MPFPLVKQDPTSKAFTEASERSTGTQILDVVKAPIGLFGDDAKHEFVTRQEQAVSVVSWAVAAGLIGELIGYRGARSGRKAILANIPFLA</sequence>
<evidence type="ECO:0000255" key="1"/>
<evidence type="ECO:0000305" key="2"/>
<organismHost>
    <name type="scientific">Pseudomonas savastanoi pv. phaseolicola</name>
    <name type="common">Pseudomonas syringae pv. phaseolicola</name>
    <dbReference type="NCBI Taxonomy" id="319"/>
</organismHost>
<organism>
    <name type="scientific">Pseudomonas phage phi6</name>
    <name type="common">Bacteriophage phi-6</name>
    <dbReference type="NCBI Taxonomy" id="2928686"/>
    <lineage>
        <taxon>Viruses</taxon>
        <taxon>Riboviria</taxon>
        <taxon>Orthornavirae</taxon>
        <taxon>Duplornaviricota</taxon>
        <taxon>Vidaverviricetes</taxon>
        <taxon>Mindivirales</taxon>
        <taxon>Cystoviridae</taxon>
        <taxon>Cystovirus</taxon>
        <taxon>Cystovirus phi6</taxon>
    </lineage>
</organism>
<protein>
    <recommendedName>
        <fullName>Major envelope protein</fullName>
    </recommendedName>
    <alternativeName>
        <fullName>Protein P9</fullName>
    </alternativeName>
</protein>
<keyword id="KW-0472">Membrane</keyword>
<keyword id="KW-1185">Reference proteome</keyword>
<keyword id="KW-0812">Transmembrane</keyword>
<keyword id="KW-1133">Transmembrane helix</keyword>
<keyword id="KW-0261">Viral envelope protein</keyword>
<keyword id="KW-0946">Virion</keyword>
<dbReference type="EMBL" id="M12921">
    <property type="protein sequence ID" value="AAA32360.1"/>
    <property type="molecule type" value="Genomic_RNA"/>
</dbReference>
<dbReference type="PIR" id="C23368">
    <property type="entry name" value="MNBPF6"/>
</dbReference>
<dbReference type="RefSeq" id="NP_620342.1">
    <property type="nucleotide sequence ID" value="NC_003714.1"/>
</dbReference>
<dbReference type="TCDB" id="9.A.65.1.1">
    <property type="family name" value="the membrane protein insertion fusion partner (mpi-fp) family"/>
</dbReference>
<dbReference type="KEGG" id="vg:956432"/>
<dbReference type="Proteomes" id="UP000002610">
    <property type="component" value="Genome"/>
</dbReference>
<dbReference type="GO" id="GO:0033644">
    <property type="term" value="C:host cell membrane"/>
    <property type="evidence" value="ECO:0000314"/>
    <property type="project" value="CACAO"/>
</dbReference>
<dbReference type="GO" id="GO:0016020">
    <property type="term" value="C:membrane"/>
    <property type="evidence" value="ECO:0007669"/>
    <property type="project" value="UniProtKB-KW"/>
</dbReference>
<dbReference type="GO" id="GO:0019031">
    <property type="term" value="C:viral envelope"/>
    <property type="evidence" value="ECO:0007669"/>
    <property type="project" value="UniProtKB-KW"/>
</dbReference>
<dbReference type="GO" id="GO:0055036">
    <property type="term" value="C:virion membrane"/>
    <property type="evidence" value="ECO:0007669"/>
    <property type="project" value="UniProtKB-SubCell"/>
</dbReference>
<reference key="1">
    <citation type="journal article" date="1986" name="J. Virol.">
        <title>Nucleotide sequence of the small double-stranded RNA segment of bacteriophage phi 6: novel mechanism of natural translational control.</title>
        <authorList>
            <person name="McGraw T."/>
            <person name="Mindich L."/>
            <person name="Frangione B."/>
        </authorList>
    </citation>
    <scope>NUCLEOTIDE SEQUENCE [GENOMIC RNA]</scope>
</reference>
<accession>P07581</accession>
<comment type="function">
    <text>Essential for membrane formation.</text>
</comment>
<comment type="subcellular location">
    <subcellularLocation>
        <location evidence="2">Virion membrane</location>
        <topology evidence="2">Single-pass membrane protein</topology>
    </subcellularLocation>
</comment>